<gene>
    <name type="primary">TIM50</name>
    <name type="ORF">FGRRES_09359</name>
    <name type="ORF">FGSG_09359</name>
</gene>
<name>TIM50_GIBZE</name>
<reference key="1">
    <citation type="journal article" date="2007" name="Science">
        <title>The Fusarium graminearum genome reveals a link between localized polymorphism and pathogen specialization.</title>
        <authorList>
            <person name="Cuomo C.A."/>
            <person name="Gueldener U."/>
            <person name="Xu J.-R."/>
            <person name="Trail F."/>
            <person name="Turgeon B.G."/>
            <person name="Di Pietro A."/>
            <person name="Walton J.D."/>
            <person name="Ma L.-J."/>
            <person name="Baker S.E."/>
            <person name="Rep M."/>
            <person name="Adam G."/>
            <person name="Antoniw J."/>
            <person name="Baldwin T."/>
            <person name="Calvo S.E."/>
            <person name="Chang Y.-L."/>
            <person name="DeCaprio D."/>
            <person name="Gale L.R."/>
            <person name="Gnerre S."/>
            <person name="Goswami R.S."/>
            <person name="Hammond-Kosack K."/>
            <person name="Harris L.J."/>
            <person name="Hilburn K."/>
            <person name="Kennell J.C."/>
            <person name="Kroken S."/>
            <person name="Magnuson J.K."/>
            <person name="Mannhaupt G."/>
            <person name="Mauceli E.W."/>
            <person name="Mewes H.-W."/>
            <person name="Mitterbauer R."/>
            <person name="Muehlbauer G."/>
            <person name="Muensterkoetter M."/>
            <person name="Nelson D."/>
            <person name="O'Donnell K."/>
            <person name="Ouellet T."/>
            <person name="Qi W."/>
            <person name="Quesneville H."/>
            <person name="Roncero M.I.G."/>
            <person name="Seong K.-Y."/>
            <person name="Tetko I.V."/>
            <person name="Urban M."/>
            <person name="Waalwijk C."/>
            <person name="Ward T.J."/>
            <person name="Yao J."/>
            <person name="Birren B.W."/>
            <person name="Kistler H.C."/>
        </authorList>
    </citation>
    <scope>NUCLEOTIDE SEQUENCE [LARGE SCALE GENOMIC DNA]</scope>
    <source>
        <strain>ATCC MYA-4620 / CBS 123657 / FGSC 9075 / NRRL 31084 / PH-1</strain>
    </source>
</reference>
<reference key="2">
    <citation type="journal article" date="2010" name="Nature">
        <title>Comparative genomics reveals mobile pathogenicity chromosomes in Fusarium.</title>
        <authorList>
            <person name="Ma L.-J."/>
            <person name="van der Does H.C."/>
            <person name="Borkovich K.A."/>
            <person name="Coleman J.J."/>
            <person name="Daboussi M.-J."/>
            <person name="Di Pietro A."/>
            <person name="Dufresne M."/>
            <person name="Freitag M."/>
            <person name="Grabherr M."/>
            <person name="Henrissat B."/>
            <person name="Houterman P.M."/>
            <person name="Kang S."/>
            <person name="Shim W.-B."/>
            <person name="Woloshuk C."/>
            <person name="Xie X."/>
            <person name="Xu J.-R."/>
            <person name="Antoniw J."/>
            <person name="Baker S.E."/>
            <person name="Bluhm B.H."/>
            <person name="Breakspear A."/>
            <person name="Brown D.W."/>
            <person name="Butchko R.A.E."/>
            <person name="Chapman S."/>
            <person name="Coulson R."/>
            <person name="Coutinho P.M."/>
            <person name="Danchin E.G.J."/>
            <person name="Diener A."/>
            <person name="Gale L.R."/>
            <person name="Gardiner D.M."/>
            <person name="Goff S."/>
            <person name="Hammond-Kosack K.E."/>
            <person name="Hilburn K."/>
            <person name="Hua-Van A."/>
            <person name="Jonkers W."/>
            <person name="Kazan K."/>
            <person name="Kodira C.D."/>
            <person name="Koehrsen M."/>
            <person name="Kumar L."/>
            <person name="Lee Y.-H."/>
            <person name="Li L."/>
            <person name="Manners J.M."/>
            <person name="Miranda-Saavedra D."/>
            <person name="Mukherjee M."/>
            <person name="Park G."/>
            <person name="Park J."/>
            <person name="Park S.-Y."/>
            <person name="Proctor R.H."/>
            <person name="Regev A."/>
            <person name="Ruiz-Roldan M.C."/>
            <person name="Sain D."/>
            <person name="Sakthikumar S."/>
            <person name="Sykes S."/>
            <person name="Schwartz D.C."/>
            <person name="Turgeon B.G."/>
            <person name="Wapinski I."/>
            <person name="Yoder O."/>
            <person name="Young S."/>
            <person name="Zeng Q."/>
            <person name="Zhou S."/>
            <person name="Galagan J."/>
            <person name="Cuomo C.A."/>
            <person name="Kistler H.C."/>
            <person name="Rep M."/>
        </authorList>
    </citation>
    <scope>GENOME REANNOTATION</scope>
    <source>
        <strain>ATCC MYA-4620 / CBS 123657 / FGSC 9075 / NRRL 31084 / PH-1</strain>
    </source>
</reference>
<reference key="3">
    <citation type="journal article" date="2015" name="BMC Genomics">
        <title>The completed genome sequence of the pathogenic ascomycete fungus Fusarium graminearum.</title>
        <authorList>
            <person name="King R."/>
            <person name="Urban M."/>
            <person name="Hammond-Kosack M.C.U."/>
            <person name="Hassani-Pak K."/>
            <person name="Hammond-Kosack K.E."/>
        </authorList>
    </citation>
    <scope>NUCLEOTIDE SEQUENCE [LARGE SCALE GENOMIC DNA]</scope>
    <source>
        <strain>ATCC MYA-4620 / CBS 123657 / FGSC 9075 / NRRL 31084 / PH-1</strain>
    </source>
</reference>
<organism>
    <name type="scientific">Gibberella zeae (strain ATCC MYA-4620 / CBS 123657 / FGSC 9075 / NRRL 31084 / PH-1)</name>
    <name type="common">Wheat head blight fungus</name>
    <name type="synonym">Fusarium graminearum</name>
    <dbReference type="NCBI Taxonomy" id="229533"/>
    <lineage>
        <taxon>Eukaryota</taxon>
        <taxon>Fungi</taxon>
        <taxon>Dikarya</taxon>
        <taxon>Ascomycota</taxon>
        <taxon>Pezizomycotina</taxon>
        <taxon>Sordariomycetes</taxon>
        <taxon>Hypocreomycetidae</taxon>
        <taxon>Hypocreales</taxon>
        <taxon>Nectriaceae</taxon>
        <taxon>Fusarium</taxon>
    </lineage>
</organism>
<proteinExistence type="inferred from homology"/>
<protein>
    <recommendedName>
        <fullName>Mitochondrial import inner membrane translocase subunit TIM50</fullName>
    </recommendedName>
</protein>
<keyword id="KW-0472">Membrane</keyword>
<keyword id="KW-0496">Mitochondrion</keyword>
<keyword id="KW-0999">Mitochondrion inner membrane</keyword>
<keyword id="KW-0653">Protein transport</keyword>
<keyword id="KW-1185">Reference proteome</keyword>
<keyword id="KW-0809">Transit peptide</keyword>
<keyword id="KW-0811">Translocation</keyword>
<keyword id="KW-0812">Transmembrane</keyword>
<keyword id="KW-1133">Transmembrane helix</keyword>
<keyword id="KW-0813">Transport</keyword>
<evidence type="ECO:0000250" key="1"/>
<evidence type="ECO:0000255" key="2"/>
<evidence type="ECO:0000255" key="3">
    <source>
        <dbReference type="PROSITE-ProRule" id="PRU00336"/>
    </source>
</evidence>
<evidence type="ECO:0000256" key="4">
    <source>
        <dbReference type="SAM" id="MobiDB-lite"/>
    </source>
</evidence>
<evidence type="ECO:0000305" key="5"/>
<comment type="function">
    <text evidence="1">Essential component of the TIM23 complex, a complex that mediates the translocation of transit peptide-containing proteins across the mitochondrial inner membrane. Required to direct preproteins in transit and direct them to the channel protein TIM23, and possibly facilitates transfer of the translocating proteins from the TOM complex to the TIM23 complex (By similarity).</text>
</comment>
<comment type="subunit">
    <text evidence="1">Component of the TIM23 complex, at least composed of TIM23, TIM17, TIM50 and TIM21. Interacts with preproteins in transit (By similarity).</text>
</comment>
<comment type="subcellular location">
    <subcellularLocation>
        <location evidence="1">Mitochondrion inner membrane</location>
        <topology evidence="1">Single-pass membrane protein</topology>
    </subcellularLocation>
</comment>
<comment type="similarity">
    <text evidence="5">Belongs to the TIM50 family.</text>
</comment>
<dbReference type="EMBL" id="DS231668">
    <property type="protein sequence ID" value="ESU15930.1"/>
    <property type="molecule type" value="Genomic_DNA"/>
</dbReference>
<dbReference type="EMBL" id="HG970335">
    <property type="protein sequence ID" value="CEF85324.1"/>
    <property type="molecule type" value="Genomic_DNA"/>
</dbReference>
<dbReference type="RefSeq" id="XP_011328386.1">
    <property type="nucleotide sequence ID" value="XM_011330084.1"/>
</dbReference>
<dbReference type="SMR" id="Q4I099"/>
<dbReference type="FunCoup" id="Q4I099">
    <property type="interactions" value="455"/>
</dbReference>
<dbReference type="STRING" id="229533.Q4I099"/>
<dbReference type="DNASU" id="2790980"/>
<dbReference type="GeneID" id="23556315"/>
<dbReference type="KEGG" id="fgr:FGSG_09359"/>
<dbReference type="VEuPathDB" id="FungiDB:FGRAMPH1_01G27271"/>
<dbReference type="eggNOG" id="KOG2832">
    <property type="taxonomic scope" value="Eukaryota"/>
</dbReference>
<dbReference type="HOGENOM" id="CLU_023309_0_0_1"/>
<dbReference type="InParanoid" id="Q4I099"/>
<dbReference type="OrthoDB" id="102639at110618"/>
<dbReference type="PHI-base" id="PHI:5758"/>
<dbReference type="Proteomes" id="UP000070720">
    <property type="component" value="Chromosome 4"/>
</dbReference>
<dbReference type="GO" id="GO:0005743">
    <property type="term" value="C:mitochondrial inner membrane"/>
    <property type="evidence" value="ECO:0007669"/>
    <property type="project" value="UniProtKB-SubCell"/>
</dbReference>
<dbReference type="GO" id="GO:0015031">
    <property type="term" value="P:protein transport"/>
    <property type="evidence" value="ECO:0007669"/>
    <property type="project" value="UniProtKB-KW"/>
</dbReference>
<dbReference type="CDD" id="cd07521">
    <property type="entry name" value="HAD_FCP1-like"/>
    <property type="match status" value="1"/>
</dbReference>
<dbReference type="FunFam" id="3.40.50.1000:FF:000019">
    <property type="entry name" value="Mitochondrial import inner membrane translocase subunit TIM50"/>
    <property type="match status" value="1"/>
</dbReference>
<dbReference type="Gene3D" id="3.40.50.1000">
    <property type="entry name" value="HAD superfamily/HAD-like"/>
    <property type="match status" value="1"/>
</dbReference>
<dbReference type="InterPro" id="IPR004274">
    <property type="entry name" value="FCP1_dom"/>
</dbReference>
<dbReference type="InterPro" id="IPR036412">
    <property type="entry name" value="HAD-like_sf"/>
</dbReference>
<dbReference type="InterPro" id="IPR023214">
    <property type="entry name" value="HAD_sf"/>
</dbReference>
<dbReference type="InterPro" id="IPR050365">
    <property type="entry name" value="TIM50"/>
</dbReference>
<dbReference type="PANTHER" id="PTHR12210">
    <property type="entry name" value="DULLARD PROTEIN PHOSPHATASE"/>
    <property type="match status" value="1"/>
</dbReference>
<dbReference type="Pfam" id="PF03031">
    <property type="entry name" value="NIF"/>
    <property type="match status" value="1"/>
</dbReference>
<dbReference type="SMART" id="SM00577">
    <property type="entry name" value="CPDc"/>
    <property type="match status" value="1"/>
</dbReference>
<dbReference type="SUPFAM" id="SSF56784">
    <property type="entry name" value="HAD-like"/>
    <property type="match status" value="1"/>
</dbReference>
<dbReference type="PROSITE" id="PS50969">
    <property type="entry name" value="FCP1"/>
    <property type="match status" value="1"/>
</dbReference>
<sequence length="525" mass="59825">MLSRLAQASRLGLMTARLSQPVASPSLRAIPATAPHFASPWLRSYSKRSSGQPPKESKKKPSQAQNDAEAAKTPEKPAENDVNKASEQSPEAPKEGEQIPFHKLPDLTQGIPSTLFEEMGGDKKKEQQALQELEEAESKGNERDRSEYVSTSERNRKWWTRFMLTAVAAGGTLSLLYMGRNWEDTIEAERHSDSPNGPSPSLWWKRAKARMTESVTYYQEPAFEKLLPDPDPTFERPYTLCLSLDDLLIHSEWTREHGWRIAKRPGVDYFIRYLSQYYELVLFTTTPYATGEPVMRKLDPFRLILWPLYREATKFEDGEIVKDLSYLNRDLSKVIIIDTKAKHVRNQPDNAIILDPWKGDKDDKNLVNLIPFLEYIHTMQYSDVRKVIKSFDGKDIPTEFARREAIARKEFQAKQLTHKHKHGSGVGALGNMLGLKPSNMNMMVSPDGEQNPAEAFAQGKMLQDVARERGQRNYMELEKQIRENGEKWLKEEAAMMEAAQKEAMNSMMGSFGGWFGGNNPPEKKA</sequence>
<feature type="transit peptide" description="Mitochondrion" evidence="2">
    <location>
        <begin position="1"/>
        <end position="45"/>
    </location>
</feature>
<feature type="chain" id="PRO_0000043132" description="Mitochondrial import inner membrane translocase subunit TIM50">
    <location>
        <begin position="46"/>
        <end position="525"/>
    </location>
</feature>
<feature type="topological domain" description="Mitochondrial matrix" evidence="2">
    <location>
        <begin position="46"/>
        <end position="161"/>
    </location>
</feature>
<feature type="transmembrane region" description="Helical" evidence="2">
    <location>
        <begin position="162"/>
        <end position="179"/>
    </location>
</feature>
<feature type="topological domain" description="Mitochondrial intermembrane" evidence="2">
    <location>
        <begin position="180"/>
        <end position="525"/>
    </location>
</feature>
<feature type="domain" description="FCP1 homology" evidence="3">
    <location>
        <begin position="233"/>
        <end position="376"/>
    </location>
</feature>
<feature type="region of interest" description="Disordered" evidence="4">
    <location>
        <begin position="35"/>
        <end position="150"/>
    </location>
</feature>
<feature type="compositionally biased region" description="Basic and acidic residues" evidence="4">
    <location>
        <begin position="69"/>
        <end position="84"/>
    </location>
</feature>
<feature type="compositionally biased region" description="Basic and acidic residues" evidence="4">
    <location>
        <begin position="136"/>
        <end position="147"/>
    </location>
</feature>
<accession>Q4I099</accession>
<accession>A0A098DVF3</accession>
<accession>A0A0E0SFW1</accession>
<accession>V6RVE6</accession>